<reference evidence="9" key="1">
    <citation type="journal article" date="2000" name="Science">
        <title>The genome sequence of Drosophila melanogaster.</title>
        <authorList>
            <person name="Adams M.D."/>
            <person name="Celniker S.E."/>
            <person name="Holt R.A."/>
            <person name="Evans C.A."/>
            <person name="Gocayne J.D."/>
            <person name="Amanatides P.G."/>
            <person name="Scherer S.E."/>
            <person name="Li P.W."/>
            <person name="Hoskins R.A."/>
            <person name="Galle R.F."/>
            <person name="George R.A."/>
            <person name="Lewis S.E."/>
            <person name="Richards S."/>
            <person name="Ashburner M."/>
            <person name="Henderson S.N."/>
            <person name="Sutton G.G."/>
            <person name="Wortman J.R."/>
            <person name="Yandell M.D."/>
            <person name="Zhang Q."/>
            <person name="Chen L.X."/>
            <person name="Brandon R.C."/>
            <person name="Rogers Y.-H.C."/>
            <person name="Blazej R.G."/>
            <person name="Champe M."/>
            <person name="Pfeiffer B.D."/>
            <person name="Wan K.H."/>
            <person name="Doyle C."/>
            <person name="Baxter E.G."/>
            <person name="Helt G."/>
            <person name="Nelson C.R."/>
            <person name="Miklos G.L.G."/>
            <person name="Abril J.F."/>
            <person name="Agbayani A."/>
            <person name="An H.-J."/>
            <person name="Andrews-Pfannkoch C."/>
            <person name="Baldwin D."/>
            <person name="Ballew R.M."/>
            <person name="Basu A."/>
            <person name="Baxendale J."/>
            <person name="Bayraktaroglu L."/>
            <person name="Beasley E.M."/>
            <person name="Beeson K.Y."/>
            <person name="Benos P.V."/>
            <person name="Berman B.P."/>
            <person name="Bhandari D."/>
            <person name="Bolshakov S."/>
            <person name="Borkova D."/>
            <person name="Botchan M.R."/>
            <person name="Bouck J."/>
            <person name="Brokstein P."/>
            <person name="Brottier P."/>
            <person name="Burtis K.C."/>
            <person name="Busam D.A."/>
            <person name="Butler H."/>
            <person name="Cadieu E."/>
            <person name="Center A."/>
            <person name="Chandra I."/>
            <person name="Cherry J.M."/>
            <person name="Cawley S."/>
            <person name="Dahlke C."/>
            <person name="Davenport L.B."/>
            <person name="Davies P."/>
            <person name="de Pablos B."/>
            <person name="Delcher A."/>
            <person name="Deng Z."/>
            <person name="Mays A.D."/>
            <person name="Dew I."/>
            <person name="Dietz S.M."/>
            <person name="Dodson K."/>
            <person name="Doup L.E."/>
            <person name="Downes M."/>
            <person name="Dugan-Rocha S."/>
            <person name="Dunkov B.C."/>
            <person name="Dunn P."/>
            <person name="Durbin K.J."/>
            <person name="Evangelista C.C."/>
            <person name="Ferraz C."/>
            <person name="Ferriera S."/>
            <person name="Fleischmann W."/>
            <person name="Fosler C."/>
            <person name="Gabrielian A.E."/>
            <person name="Garg N.S."/>
            <person name="Gelbart W.M."/>
            <person name="Glasser K."/>
            <person name="Glodek A."/>
            <person name="Gong F."/>
            <person name="Gorrell J.H."/>
            <person name="Gu Z."/>
            <person name="Guan P."/>
            <person name="Harris M."/>
            <person name="Harris N.L."/>
            <person name="Harvey D.A."/>
            <person name="Heiman T.J."/>
            <person name="Hernandez J.R."/>
            <person name="Houck J."/>
            <person name="Hostin D."/>
            <person name="Houston K.A."/>
            <person name="Howland T.J."/>
            <person name="Wei M.-H."/>
            <person name="Ibegwam C."/>
            <person name="Jalali M."/>
            <person name="Kalush F."/>
            <person name="Karpen G.H."/>
            <person name="Ke Z."/>
            <person name="Kennison J.A."/>
            <person name="Ketchum K.A."/>
            <person name="Kimmel B.E."/>
            <person name="Kodira C.D."/>
            <person name="Kraft C.L."/>
            <person name="Kravitz S."/>
            <person name="Kulp D."/>
            <person name="Lai Z."/>
            <person name="Lasko P."/>
            <person name="Lei Y."/>
            <person name="Levitsky A.A."/>
            <person name="Li J.H."/>
            <person name="Li Z."/>
            <person name="Liang Y."/>
            <person name="Lin X."/>
            <person name="Liu X."/>
            <person name="Mattei B."/>
            <person name="McIntosh T.C."/>
            <person name="McLeod M.P."/>
            <person name="McPherson D."/>
            <person name="Merkulov G."/>
            <person name="Milshina N.V."/>
            <person name="Mobarry C."/>
            <person name="Morris J."/>
            <person name="Moshrefi A."/>
            <person name="Mount S.M."/>
            <person name="Moy M."/>
            <person name="Murphy B."/>
            <person name="Murphy L."/>
            <person name="Muzny D.M."/>
            <person name="Nelson D.L."/>
            <person name="Nelson D.R."/>
            <person name="Nelson K.A."/>
            <person name="Nixon K."/>
            <person name="Nusskern D.R."/>
            <person name="Pacleb J.M."/>
            <person name="Palazzolo M."/>
            <person name="Pittman G.S."/>
            <person name="Pan S."/>
            <person name="Pollard J."/>
            <person name="Puri V."/>
            <person name="Reese M.G."/>
            <person name="Reinert K."/>
            <person name="Remington K."/>
            <person name="Saunders R.D.C."/>
            <person name="Scheeler F."/>
            <person name="Shen H."/>
            <person name="Shue B.C."/>
            <person name="Siden-Kiamos I."/>
            <person name="Simpson M."/>
            <person name="Skupski M.P."/>
            <person name="Smith T.J."/>
            <person name="Spier E."/>
            <person name="Spradling A.C."/>
            <person name="Stapleton M."/>
            <person name="Strong R."/>
            <person name="Sun E."/>
            <person name="Svirskas R."/>
            <person name="Tector C."/>
            <person name="Turner R."/>
            <person name="Venter E."/>
            <person name="Wang A.H."/>
            <person name="Wang X."/>
            <person name="Wang Z.-Y."/>
            <person name="Wassarman D.A."/>
            <person name="Weinstock G.M."/>
            <person name="Weissenbach J."/>
            <person name="Williams S.M."/>
            <person name="Woodage T."/>
            <person name="Worley K.C."/>
            <person name="Wu D."/>
            <person name="Yang S."/>
            <person name="Yao Q.A."/>
            <person name="Ye J."/>
            <person name="Yeh R.-F."/>
            <person name="Zaveri J.S."/>
            <person name="Zhan M."/>
            <person name="Zhang G."/>
            <person name="Zhao Q."/>
            <person name="Zheng L."/>
            <person name="Zheng X.H."/>
            <person name="Zhong F.N."/>
            <person name="Zhong W."/>
            <person name="Zhou X."/>
            <person name="Zhu S.C."/>
            <person name="Zhu X."/>
            <person name="Smith H.O."/>
            <person name="Gibbs R.A."/>
            <person name="Myers E.W."/>
            <person name="Rubin G.M."/>
            <person name="Venter J.C."/>
        </authorList>
    </citation>
    <scope>NUCLEOTIDE SEQUENCE [LARGE SCALE GENOMIC DNA]</scope>
    <source>
        <strain evidence="9">Berkeley</strain>
    </source>
</reference>
<reference evidence="9" key="2">
    <citation type="journal article" date="2002" name="Genome Biol.">
        <title>Annotation of the Drosophila melanogaster euchromatic genome: a systematic review.</title>
        <authorList>
            <person name="Misra S."/>
            <person name="Crosby M.A."/>
            <person name="Mungall C.J."/>
            <person name="Matthews B.B."/>
            <person name="Campbell K.S."/>
            <person name="Hradecky P."/>
            <person name="Huang Y."/>
            <person name="Kaminker J.S."/>
            <person name="Millburn G.H."/>
            <person name="Prochnik S.E."/>
            <person name="Smith C.D."/>
            <person name="Tupy J.L."/>
            <person name="Whitfield E.J."/>
            <person name="Bayraktaroglu L."/>
            <person name="Berman B.P."/>
            <person name="Bettencourt B.R."/>
            <person name="Celniker S.E."/>
            <person name="de Grey A.D.N.J."/>
            <person name="Drysdale R.A."/>
            <person name="Harris N.L."/>
            <person name="Richter J."/>
            <person name="Russo S."/>
            <person name="Schroeder A.J."/>
            <person name="Shu S.Q."/>
            <person name="Stapleton M."/>
            <person name="Yamada C."/>
            <person name="Ashburner M."/>
            <person name="Gelbart W.M."/>
            <person name="Rubin G.M."/>
            <person name="Lewis S.E."/>
        </authorList>
    </citation>
    <scope>GENOME REANNOTATION</scope>
    <source>
        <strain evidence="9">Berkeley</strain>
    </source>
</reference>
<reference evidence="7" key="3">
    <citation type="submission" date="2006-10" db="EMBL/GenBank/DDBJ databases">
        <authorList>
            <person name="Stapleton M."/>
            <person name="Carlson J."/>
            <person name="Frise E."/>
            <person name="Kapadia B."/>
            <person name="Park S."/>
            <person name="Wan K."/>
            <person name="Yu C."/>
            <person name="Celniker S."/>
        </authorList>
    </citation>
    <scope>NUCLEOTIDE SEQUENCE [LARGE SCALE MRNA]</scope>
</reference>
<reference evidence="5" key="4">
    <citation type="journal article" date="2019" name="PLoS Genet.">
        <title>Narya, a RING finger domain-containing protein, is required for meiotic DNA double-strand break formation and crossover maturation in Drosophila melanogaster.</title>
        <authorList>
            <person name="Lake C.M."/>
            <person name="Nielsen R.J."/>
            <person name="Bonner A.M."/>
            <person name="Eche S."/>
            <person name="White-Brown S."/>
            <person name="McKim K.S."/>
            <person name="Hawley R.S."/>
        </authorList>
    </citation>
    <scope>FUNCTION</scope>
</reference>
<protein>
    <recommendedName>
        <fullName evidence="4 8">RING finger protein nenya</fullName>
    </recommendedName>
</protein>
<feature type="chain" id="PRO_0000447342" description="RING finger protein nenya">
    <location>
        <begin position="1"/>
        <end position="219"/>
    </location>
</feature>
<feature type="zinc finger region" description="RING-type" evidence="1">
    <location>
        <begin position="6"/>
        <end position="48"/>
    </location>
</feature>
<feature type="region of interest" description="Disordered" evidence="2">
    <location>
        <begin position="161"/>
        <end position="181"/>
    </location>
</feature>
<sequence length="219" mass="25980">MFRIHCNKCFRRRNVEPTLIFHMTQCQHVLCASCLSESSTDKKCPLCKRDLRAIPIDKNLPPNVAQYFEDPLRFQQLYRKISKFQADQRASDNLGFYRQMQEHEKNESRLKGFCKMEAQFNQQIQKEKERIAELRAYIKYHEEEGLKEWPHATGVEKPWSNQARGLRPRTPSVTTSDNTQSDEHMTTFCLDSDIDCLEEDEPRRYVKKTFNGNIKDFHI</sequence>
<name>NENYA_DROME</name>
<organism evidence="9">
    <name type="scientific">Drosophila melanogaster</name>
    <name type="common">Fruit fly</name>
    <dbReference type="NCBI Taxonomy" id="7227"/>
    <lineage>
        <taxon>Eukaryota</taxon>
        <taxon>Metazoa</taxon>
        <taxon>Ecdysozoa</taxon>
        <taxon>Arthropoda</taxon>
        <taxon>Hexapoda</taxon>
        <taxon>Insecta</taxon>
        <taxon>Pterygota</taxon>
        <taxon>Neoptera</taxon>
        <taxon>Endopterygota</taxon>
        <taxon>Diptera</taxon>
        <taxon>Brachycera</taxon>
        <taxon>Muscomorpha</taxon>
        <taxon>Ephydroidea</taxon>
        <taxon>Drosophilidae</taxon>
        <taxon>Drosophila</taxon>
        <taxon>Sophophora</taxon>
    </lineage>
</organism>
<comment type="function">
    <text evidence="3">Required for the formation of DNA double-strand breaks together with narya and vilya during the meiotic recombination process (PubMed:30615609). Plays a redundant role with narya in chromosome segregation during female meiosis (PubMed:30615609).</text>
</comment>
<comment type="subunit">
    <text evidence="6">May interact with itself, with narya and vilya through its RING-type zinc finger.</text>
</comment>
<comment type="miscellaneous">
    <text evidence="6">Nenya, narya and vilya contain a RING-type zinc finger domain and are named after the Three Rings of Power given by the elves of Eregion in J.R.R. Tolkien's books.</text>
</comment>
<proteinExistence type="evidence at transcript level"/>
<evidence type="ECO:0000255" key="1">
    <source>
        <dbReference type="PROSITE-ProRule" id="PRU00175"/>
    </source>
</evidence>
<evidence type="ECO:0000256" key="2">
    <source>
        <dbReference type="SAM" id="MobiDB-lite"/>
    </source>
</evidence>
<evidence type="ECO:0000269" key="3">
    <source>
    </source>
</evidence>
<evidence type="ECO:0000303" key="4">
    <source>
    </source>
</evidence>
<evidence type="ECO:0000305" key="5"/>
<evidence type="ECO:0000305" key="6">
    <source>
    </source>
</evidence>
<evidence type="ECO:0000312" key="7">
    <source>
        <dbReference type="EMBL" id="ABJ17001.1"/>
    </source>
</evidence>
<evidence type="ECO:0000312" key="8">
    <source>
        <dbReference type="FlyBase" id="FBgn0051053"/>
    </source>
</evidence>
<evidence type="ECO:0000312" key="9">
    <source>
        <dbReference type="Proteomes" id="UP000000803"/>
    </source>
</evidence>
<gene>
    <name evidence="4 8" type="primary">nenya</name>
    <name evidence="8" type="ORF">CG31053</name>
</gene>
<keyword id="KW-0159">Chromosome partition</keyword>
<keyword id="KW-0469">Meiosis</keyword>
<keyword id="KW-0479">Metal-binding</keyword>
<keyword id="KW-1185">Reference proteome</keyword>
<keyword id="KW-0862">Zinc</keyword>
<keyword id="KW-0863">Zinc-finger</keyword>
<accession>Q8IMM9</accession>
<dbReference type="EMBL" id="AE014297">
    <property type="protein sequence ID" value="AAN14131.1"/>
    <property type="molecule type" value="Genomic_DNA"/>
</dbReference>
<dbReference type="EMBL" id="BT029068">
    <property type="protein sequence ID" value="ABJ17001.1"/>
    <property type="molecule type" value="mRNA"/>
</dbReference>
<dbReference type="RefSeq" id="NP_733236.1">
    <property type="nucleotide sequence ID" value="NM_170357.3"/>
</dbReference>
<dbReference type="FunCoup" id="Q8IMM9">
    <property type="interactions" value="2"/>
</dbReference>
<dbReference type="IntAct" id="Q8IMM9">
    <property type="interactions" value="2"/>
</dbReference>
<dbReference type="STRING" id="7227.FBpp0084637"/>
<dbReference type="PaxDb" id="7227-FBpp0084637"/>
<dbReference type="DNASU" id="318572"/>
<dbReference type="EnsemblMetazoa" id="FBtr0085268">
    <property type="protein sequence ID" value="FBpp0084637"/>
    <property type="gene ID" value="FBgn0051053"/>
</dbReference>
<dbReference type="GeneID" id="318572"/>
<dbReference type="KEGG" id="dme:Dmel_CG31053"/>
<dbReference type="UCSC" id="CG31053-RA">
    <property type="organism name" value="d. melanogaster"/>
</dbReference>
<dbReference type="AGR" id="FB:FBgn0051053"/>
<dbReference type="CTD" id="318572"/>
<dbReference type="FlyBase" id="FBgn0051053">
    <property type="gene designation" value="nenya"/>
</dbReference>
<dbReference type="VEuPathDB" id="VectorBase:FBgn0051053"/>
<dbReference type="eggNOG" id="KOG4739">
    <property type="taxonomic scope" value="Eukaryota"/>
</dbReference>
<dbReference type="GeneTree" id="ENSGT00740000115581"/>
<dbReference type="HOGENOM" id="CLU_1268118_0_0_1"/>
<dbReference type="InParanoid" id="Q8IMM9"/>
<dbReference type="OMA" id="YIAYHEE"/>
<dbReference type="OrthoDB" id="2535391at2759"/>
<dbReference type="PhylomeDB" id="Q8IMM9"/>
<dbReference type="BioGRID-ORCS" id="318572">
    <property type="hits" value="0 hits in 3 CRISPR screens"/>
</dbReference>
<dbReference type="GenomeRNAi" id="318572"/>
<dbReference type="PRO" id="PR:Q8IMM9"/>
<dbReference type="Proteomes" id="UP000000803">
    <property type="component" value="Chromosome 3R"/>
</dbReference>
<dbReference type="Bgee" id="FBgn0051053">
    <property type="expression patterns" value="Expressed in fat body cell in body wall and 13 other cell types or tissues"/>
</dbReference>
<dbReference type="GO" id="GO:0005694">
    <property type="term" value="C:chromosome"/>
    <property type="evidence" value="ECO:0000250"/>
    <property type="project" value="UniProtKB"/>
</dbReference>
<dbReference type="GO" id="GO:0000795">
    <property type="term" value="C:synaptonemal complex"/>
    <property type="evidence" value="ECO:0000318"/>
    <property type="project" value="GO_Central"/>
</dbReference>
<dbReference type="GO" id="GO:0019789">
    <property type="term" value="F:SUMO transferase activity"/>
    <property type="evidence" value="ECO:0000318"/>
    <property type="project" value="GO_Central"/>
</dbReference>
<dbReference type="GO" id="GO:0008270">
    <property type="term" value="F:zinc ion binding"/>
    <property type="evidence" value="ECO:0000255"/>
    <property type="project" value="FlyBase"/>
</dbReference>
<dbReference type="GO" id="GO:0007129">
    <property type="term" value="P:homologous chromosome pairing at meiosis"/>
    <property type="evidence" value="ECO:0000318"/>
    <property type="project" value="GO_Central"/>
</dbReference>
<dbReference type="GO" id="GO:1903343">
    <property type="term" value="P:positive regulation of meiotic DNA double-strand break formation"/>
    <property type="evidence" value="ECO:0000316"/>
    <property type="project" value="UniProtKB"/>
</dbReference>
<dbReference type="GO" id="GO:0007131">
    <property type="term" value="P:reciprocal meiotic recombination"/>
    <property type="evidence" value="ECO:0007669"/>
    <property type="project" value="InterPro"/>
</dbReference>
<dbReference type="FunFam" id="3.30.40.10:FF:000839">
    <property type="entry name" value="Ring finger protein 212"/>
    <property type="match status" value="1"/>
</dbReference>
<dbReference type="Gene3D" id="3.30.40.10">
    <property type="entry name" value="Zinc/RING finger domain, C3HC4 (zinc finger)"/>
    <property type="match status" value="1"/>
</dbReference>
<dbReference type="InterPro" id="IPR042123">
    <property type="entry name" value="Zip3/RNF212-like"/>
</dbReference>
<dbReference type="InterPro" id="IPR001841">
    <property type="entry name" value="Znf_RING"/>
</dbReference>
<dbReference type="InterPro" id="IPR013083">
    <property type="entry name" value="Znf_RING/FYVE/PHD"/>
</dbReference>
<dbReference type="InterPro" id="IPR017907">
    <property type="entry name" value="Znf_RING_CS"/>
</dbReference>
<dbReference type="PANTHER" id="PTHR22663">
    <property type="entry name" value="RING FINGER PROTEIN NARYA-RELATED"/>
    <property type="match status" value="1"/>
</dbReference>
<dbReference type="PANTHER" id="PTHR22663:SF17">
    <property type="entry name" value="RING FINGER PROTEIN NARYA-RELATED"/>
    <property type="match status" value="1"/>
</dbReference>
<dbReference type="Pfam" id="PF14634">
    <property type="entry name" value="zf-RING_5"/>
    <property type="match status" value="1"/>
</dbReference>
<dbReference type="SUPFAM" id="SSF57850">
    <property type="entry name" value="RING/U-box"/>
    <property type="match status" value="1"/>
</dbReference>
<dbReference type="PROSITE" id="PS00518">
    <property type="entry name" value="ZF_RING_1"/>
    <property type="match status" value="1"/>
</dbReference>
<dbReference type="PROSITE" id="PS50089">
    <property type="entry name" value="ZF_RING_2"/>
    <property type="match status" value="1"/>
</dbReference>